<reference key="1">
    <citation type="submission" date="2008-05" db="EMBL/GenBank/DDBJ databases">
        <title>Complete sequence of Shigella boydii serotype 18 strain BS512.</title>
        <authorList>
            <person name="Rasko D.A."/>
            <person name="Rosovitz M."/>
            <person name="Maurelli A.T."/>
            <person name="Myers G."/>
            <person name="Seshadri R."/>
            <person name="Cer R."/>
            <person name="Jiang L."/>
            <person name="Ravel J."/>
            <person name="Sebastian Y."/>
        </authorList>
    </citation>
    <scope>NUCLEOTIDE SEQUENCE [LARGE SCALE GENOMIC DNA]</scope>
    <source>
        <strain>CDC 3083-94 / BS512</strain>
    </source>
</reference>
<proteinExistence type="inferred from homology"/>
<keyword id="KW-0012">Acyltransferase</keyword>
<keyword id="KW-0056">Arginine metabolism</keyword>
<keyword id="KW-1185">Reference proteome</keyword>
<keyword id="KW-0808">Transferase</keyword>
<dbReference type="EC" id="2.3.1.109" evidence="1"/>
<dbReference type="EMBL" id="CP001063">
    <property type="protein sequence ID" value="ACD09891.1"/>
    <property type="molecule type" value="Genomic_DNA"/>
</dbReference>
<dbReference type="RefSeq" id="WP_000989403.1">
    <property type="nucleotide sequence ID" value="NC_010658.1"/>
</dbReference>
<dbReference type="SMR" id="B2U3C9"/>
<dbReference type="STRING" id="344609.SbBS512_E1994"/>
<dbReference type="KEGG" id="sbc:SbBS512_E1994"/>
<dbReference type="HOGENOM" id="CLU_057655_0_0_6"/>
<dbReference type="UniPathway" id="UPA00185">
    <property type="reaction ID" value="UER00279"/>
</dbReference>
<dbReference type="Proteomes" id="UP000001030">
    <property type="component" value="Chromosome"/>
</dbReference>
<dbReference type="GO" id="GO:0008791">
    <property type="term" value="F:arginine N-succinyltransferase activity"/>
    <property type="evidence" value="ECO:0007669"/>
    <property type="project" value="UniProtKB-UniRule"/>
</dbReference>
<dbReference type="GO" id="GO:0019544">
    <property type="term" value="P:arginine catabolic process to glutamate"/>
    <property type="evidence" value="ECO:0007669"/>
    <property type="project" value="UniProtKB-UniRule"/>
</dbReference>
<dbReference type="GO" id="GO:0019545">
    <property type="term" value="P:arginine catabolic process to succinate"/>
    <property type="evidence" value="ECO:0007669"/>
    <property type="project" value="UniProtKB-UniRule"/>
</dbReference>
<dbReference type="Gene3D" id="2.40.40.20">
    <property type="match status" value="1"/>
</dbReference>
<dbReference type="Gene3D" id="3.40.630.30">
    <property type="match status" value="1"/>
</dbReference>
<dbReference type="HAMAP" id="MF_01171">
    <property type="entry name" value="AstA"/>
    <property type="match status" value="1"/>
</dbReference>
<dbReference type="InterPro" id="IPR016181">
    <property type="entry name" value="Acyl_CoA_acyltransferase"/>
</dbReference>
<dbReference type="InterPro" id="IPR007041">
    <property type="entry name" value="Arg_succinylTrfase_AstA/AruG"/>
</dbReference>
<dbReference type="InterPro" id="IPR017650">
    <property type="entry name" value="Arginine_N-succinylTrfase"/>
</dbReference>
<dbReference type="NCBIfam" id="TIGR03243">
    <property type="entry name" value="arg_catab_AOST"/>
    <property type="match status" value="1"/>
</dbReference>
<dbReference type="NCBIfam" id="TIGR03244">
    <property type="entry name" value="arg_catab_AstA"/>
    <property type="match status" value="1"/>
</dbReference>
<dbReference type="NCBIfam" id="NF007770">
    <property type="entry name" value="PRK10456.1"/>
    <property type="match status" value="1"/>
</dbReference>
<dbReference type="PANTHER" id="PTHR30420:SF1">
    <property type="entry name" value="ARGININE N-SUCCINYLTRANSFERASE"/>
    <property type="match status" value="1"/>
</dbReference>
<dbReference type="PANTHER" id="PTHR30420">
    <property type="entry name" value="N-SUCCINYLARGININE DIHYDROLASE"/>
    <property type="match status" value="1"/>
</dbReference>
<dbReference type="Pfam" id="PF04958">
    <property type="entry name" value="AstA"/>
    <property type="match status" value="1"/>
</dbReference>
<dbReference type="SUPFAM" id="SSF55729">
    <property type="entry name" value="Acyl-CoA N-acyltransferases (Nat)"/>
    <property type="match status" value="1"/>
</dbReference>
<gene>
    <name evidence="1" type="primary">astA</name>
    <name type="ordered locus">SbBS512_E1994</name>
</gene>
<feature type="chain" id="PRO_1000137991" description="Arginine N-succinyltransferase">
    <location>
        <begin position="1"/>
        <end position="344"/>
    </location>
</feature>
<feature type="active site" description="Proton donor" evidence="1">
    <location>
        <position position="229"/>
    </location>
</feature>
<feature type="binding site" evidence="1">
    <location>
        <position position="125"/>
    </location>
    <ligand>
        <name>succinyl-CoA</name>
        <dbReference type="ChEBI" id="CHEBI:57292"/>
    </ligand>
</feature>
<sequence length="344" mass="38386">MMVIRPVERSDVSALMQLASKTGGGLTSLPANEATLSARIERAIKTWQGELPKSEQGYVFVLEDSETGTVAGICAIEVAVGLNDPWHNYRVGTLVHASKELNVYNALPTLFLSNDHTGSSELCTLFLDPDWRKEGNGYLLSKSRFMFMAAFRDKFNDKVVAEMRGVIDEHGYSPFWQSLGKRFFSMDFSRADFLCGTGQKAFIAELMPKHPIYTHFLSQEAQDVIGQVHPQTAPARAVLEKEGFRYRNYIDIFDGGPTLECDIDRVRAIRKSRLVEVAEGQPAQGDFPACLVANENYHHFRVVLARTDPATERLILTAAQLDALKCHAGERVRLVRLCAVEKTA</sequence>
<protein>
    <recommendedName>
        <fullName evidence="1">Arginine N-succinyltransferase</fullName>
        <shortName evidence="1">AST</shortName>
        <ecNumber evidence="1">2.3.1.109</ecNumber>
    </recommendedName>
    <alternativeName>
        <fullName evidence="1">AOST</fullName>
    </alternativeName>
</protein>
<accession>B2U3C9</accession>
<name>ASTA_SHIB3</name>
<organism>
    <name type="scientific">Shigella boydii serotype 18 (strain CDC 3083-94 / BS512)</name>
    <dbReference type="NCBI Taxonomy" id="344609"/>
    <lineage>
        <taxon>Bacteria</taxon>
        <taxon>Pseudomonadati</taxon>
        <taxon>Pseudomonadota</taxon>
        <taxon>Gammaproteobacteria</taxon>
        <taxon>Enterobacterales</taxon>
        <taxon>Enterobacteriaceae</taxon>
        <taxon>Shigella</taxon>
    </lineage>
</organism>
<evidence type="ECO:0000255" key="1">
    <source>
        <dbReference type="HAMAP-Rule" id="MF_01171"/>
    </source>
</evidence>
<comment type="function">
    <text evidence="1">Catalyzes the transfer of succinyl-CoA to arginine to produce N(2)-succinylarginine.</text>
</comment>
<comment type="catalytic activity">
    <reaction evidence="1">
        <text>succinyl-CoA + L-arginine = N(2)-succinyl-L-arginine + CoA + H(+)</text>
        <dbReference type="Rhea" id="RHEA:15185"/>
        <dbReference type="ChEBI" id="CHEBI:15378"/>
        <dbReference type="ChEBI" id="CHEBI:32682"/>
        <dbReference type="ChEBI" id="CHEBI:57287"/>
        <dbReference type="ChEBI" id="CHEBI:57292"/>
        <dbReference type="ChEBI" id="CHEBI:58241"/>
        <dbReference type="EC" id="2.3.1.109"/>
    </reaction>
</comment>
<comment type="pathway">
    <text evidence="1">Amino-acid degradation; L-arginine degradation via AST pathway; L-glutamate and succinate from L-arginine: step 1/5.</text>
</comment>
<comment type="similarity">
    <text evidence="1">Belongs to the arginine N-succinyltransferase family.</text>
</comment>